<proteinExistence type="evidence at protein level"/>
<gene>
    <name type="primary">pmrD</name>
    <name type="ordered locus">b2259</name>
    <name type="ordered locus">JW2254</name>
</gene>
<keyword id="KW-0002">3D-structure</keyword>
<keyword id="KW-0046">Antibiotic resistance</keyword>
<keyword id="KW-1185">Reference proteome</keyword>
<feature type="chain" id="PRO_0000058468" description="Signal transduction protein PmrD">
    <location>
        <begin position="1"/>
        <end position="88"/>
    </location>
</feature>
<feature type="sequence variant" description="In strain: ECOR 46, ECOR 48, ECOR 49 and O2:HN / ECOR 50 / P97 / UPEC.">
    <original>N</original>
    <variation>D</variation>
    <location>
        <position position="11"/>
    </location>
</feature>
<feature type="sequence variant" description="In strain: ECOR 53, ECOR 59 and ECOR 60.">
    <original>D</original>
    <variation>N</variation>
    <location>
        <position position="14"/>
    </location>
</feature>
<feature type="sequence variant" description="In strain: ECOR 23, ECOR 32, ECOR 38, ECOR 39, ECOR 40, ECOR 41, ECOR 51, ECOR 52, ECOR 54, ECOR 55, ECOR 56, ECOR 57, ECOR 61, ECOR 62, ECOR 63, ECOR 64, ECOR 65 and ECOR 66.">
    <original>L</original>
    <variation>I</variation>
    <location>
        <position position="19"/>
    </location>
</feature>
<feature type="sequence variant" description="In strain: ECOR 46, ECOR 49 and O2:HN / ECOR 50 / P97 / UPEC.">
    <original>M</original>
    <variation>K</variation>
    <location>
        <position position="20"/>
    </location>
</feature>
<feature type="sequence variant" description="In strain: ECOR 46, ECOR 48, ECOR 49 and O2:HN / ECOR 50 / P97 / UPEC.">
    <original>A</original>
    <variation>T</variation>
    <location>
        <position position="27"/>
    </location>
</feature>
<feature type="sequence variant" description="In strain: ECOR 38, ECOR 39, ECOR 41, ECOR 51, ECOR 52, ECOR 53, ECOR 54, ECOR 55, ECOR 56, ECOR 61, ECOR 63, ECOR 64, ECOR 65 and ECOR 66.">
    <original>S</original>
    <variation>C</variation>
    <location>
        <position position="71"/>
    </location>
</feature>
<feature type="sequence variant" description="In strain: ECOR 53, ECOR 59 and ECOR 60.">
    <original>C</original>
    <variation>S</variation>
    <location>
        <position position="81"/>
    </location>
</feature>
<feature type="sequence variant" description="In strain: ECOR 26, ECOR 27, ECOR 29, ECOR 30, ECOR 33, ECOR 44, ECOR 45, ECOR 47, ECOR 58, ECOR 67, ECOR 68, ECOR 69 and ECOR 71.">
    <original>K</original>
    <variation>T</variation>
    <location>
        <position position="82"/>
    </location>
</feature>
<feature type="sequence variant" description="In strain: ECOR 27, ECOR 33, ECOR 38, ECOR 39, ECOR 41, ECOR 44, ECOR 45, ECOR 47, ECOR 51, ECOR 52, ECOR 53, ECOR 54, ECOR 55, ECOR 56, ECOR 57, ECOR 59, ECOR 60, ECOR 61, ECOR 63, ECOR 64, ECOR 65, ECOR 66 and ECOR 69.">
    <original>V</original>
    <variation>A</variation>
    <location>
        <position position="83"/>
    </location>
</feature>
<feature type="sequence variant" description="In strain: ECOR 28 and ECOR 30.">
    <original>A</original>
    <variation>E</variation>
    <location>
        <position position="84"/>
    </location>
</feature>
<feature type="sequence conflict" description="In Ref. 1; L35031." evidence="2" ref="1">
    <original>Q</original>
    <variation>QYVVLSWAGKSASTRS</variation>
    <location>
        <position position="88"/>
    </location>
</feature>
<feature type="strand" evidence="3">
    <location>
        <begin position="3"/>
        <end position="9"/>
    </location>
</feature>
<feature type="strand" evidence="3">
    <location>
        <begin position="12"/>
        <end position="23"/>
    </location>
</feature>
<feature type="strand" evidence="3">
    <location>
        <begin position="29"/>
        <end position="35"/>
    </location>
</feature>
<feature type="strand" evidence="3">
    <location>
        <begin position="45"/>
        <end position="50"/>
    </location>
</feature>
<feature type="strand" evidence="3">
    <location>
        <begin position="53"/>
        <end position="56"/>
    </location>
</feature>
<feature type="strand" evidence="3">
    <location>
        <begin position="59"/>
        <end position="71"/>
    </location>
</feature>
<feature type="helix" evidence="3">
    <location>
        <begin position="74"/>
        <end position="84"/>
    </location>
</feature>
<comment type="function">
    <text evidence="1">Interacts with phosphorylated BasR protein to mediate transcriptional induction of BasR-activated genes to induce polymyxin resistance in some natural isolates.</text>
</comment>
<comment type="induction">
    <text evidence="1">By PhoP.</text>
</comment>
<comment type="similarity">
    <text evidence="2">Belongs to the PmrD family.</text>
</comment>
<comment type="caution">
    <text evidence="2">The PmrD protein from K12 strain (sequence shown) does not interact with phosphorylated BasR protein, and thus does not seem to be involved in polymyxin resistance.</text>
</comment>
<name>PMRD_ECOLI</name>
<reference key="1">
    <citation type="journal article" date="1996" name="Gene">
        <title>Menaquinone (vitamin K2) biosynthesis: localization and characterization of the menE gene from Escherichia coli.</title>
        <authorList>
            <person name="Sharma V."/>
            <person name="Hudspeth M.E.S."/>
            <person name="Meganathan R."/>
        </authorList>
    </citation>
    <scope>NUCLEOTIDE SEQUENCE [GENOMIC DNA]</scope>
    <source>
        <strain>K12</strain>
    </source>
</reference>
<reference key="2">
    <citation type="journal article" date="2004" name="Proc. Natl. Acad. Sci. U.S.A.">
        <title>Phenotypic differences between Salmonella and Escherichia coli resulting from the disparate regulation of homologous genes.</title>
        <authorList>
            <person name="Winfield M.D."/>
            <person name="Groisman E.A."/>
        </authorList>
    </citation>
    <scope>NUCLEOTIDE SEQUENCE [GENOMIC DNA]</scope>
    <scope>FUNCTION</scope>
    <scope>INDUCTION BY PHOP</scope>
    <source>
        <strain>ECOR 1</strain>
        <strain>ECOR 10</strain>
        <strain>ECOR 11</strain>
        <strain>ECOR 12</strain>
        <strain>ECOR 13</strain>
        <strain>ECOR 14</strain>
        <strain>ECOR 15</strain>
        <strain>ECOR 16</strain>
        <strain>ECOR 17</strain>
        <strain>ECOR 18</strain>
        <strain>ECOR 19</strain>
        <strain>ECOR 2</strain>
        <strain>ECOR 20</strain>
        <strain>ECOR 21</strain>
        <strain>ECOR 22</strain>
        <strain>ECOR 23</strain>
        <strain>ECOR 24</strain>
        <strain>ECOR 25</strain>
        <strain>ECOR 26</strain>
        <strain>ECOR 27</strain>
        <strain>ECOR 28</strain>
        <strain>ECOR 29</strain>
        <strain>ECOR 3</strain>
        <strain>ECOR 30</strain>
        <strain>ECOR 31</strain>
        <strain>ECOR 32</strain>
        <strain>ECOR 33</strain>
        <strain>ECOR 34</strain>
        <strain>ECOR 35</strain>
        <strain>ECOR 37</strain>
        <strain>ECOR 38</strain>
        <strain>ECOR 39</strain>
        <strain>ECOR 4</strain>
        <strain>ECOR 40</strain>
        <strain>ECOR 41</strain>
        <strain>ECOR 42</strain>
        <strain>ECOR 43</strain>
        <strain>ECOR 44</strain>
        <strain>ECOR 45</strain>
        <strain>ECOR 46</strain>
        <strain>ECOR 47</strain>
        <strain>ECOR 48</strain>
        <strain>ECOR 49</strain>
        <strain>ECOR 5</strain>
        <strain>ECOR 51</strain>
        <strain>ECOR 52</strain>
        <strain>ECOR 53</strain>
        <strain>ECOR 54</strain>
        <strain>ECOR 55</strain>
        <strain>ECOR 56</strain>
        <strain>ECOR 57</strain>
        <strain>ECOR 58</strain>
        <strain>ECOR 59</strain>
        <strain>ECOR 6</strain>
        <strain>ECOR 60</strain>
        <strain>ECOR 61</strain>
        <strain>ECOR 62</strain>
        <strain>ECOR 63</strain>
        <strain>ECOR 64</strain>
        <strain>ECOR 65</strain>
        <strain>ECOR 66</strain>
        <strain>ECOR 67</strain>
        <strain>ECOR 68</strain>
        <strain>ECOR 69</strain>
        <strain>ECOR 7</strain>
        <strain>ECOR 70</strain>
        <strain>ECOR 71</strain>
        <strain>ECOR 72</strain>
        <strain>ECOR 8</strain>
        <strain>ECOR 9</strain>
        <strain>O2:HN / ECOR 50 / P97 / UPEC</strain>
    </source>
</reference>
<reference key="3">
    <citation type="journal article" date="1997" name="DNA Res.">
        <title>Construction of a contiguous 874-kb sequence of the Escherichia coli-K12 genome corresponding to 50.0-68.8 min on the linkage map and analysis of its sequence features.</title>
        <authorList>
            <person name="Yamamoto Y."/>
            <person name="Aiba H."/>
            <person name="Baba T."/>
            <person name="Hayashi K."/>
            <person name="Inada T."/>
            <person name="Isono K."/>
            <person name="Itoh T."/>
            <person name="Kimura S."/>
            <person name="Kitagawa M."/>
            <person name="Makino K."/>
            <person name="Miki T."/>
            <person name="Mitsuhashi N."/>
            <person name="Mizobuchi K."/>
            <person name="Mori H."/>
            <person name="Nakade S."/>
            <person name="Nakamura Y."/>
            <person name="Nashimoto H."/>
            <person name="Oshima T."/>
            <person name="Oyama S."/>
            <person name="Saito N."/>
            <person name="Sampei G."/>
            <person name="Satoh Y."/>
            <person name="Sivasundaram S."/>
            <person name="Tagami H."/>
            <person name="Takahashi H."/>
            <person name="Takeda J."/>
            <person name="Takemoto K."/>
            <person name="Uehara K."/>
            <person name="Wada C."/>
            <person name="Yamagata S."/>
            <person name="Horiuchi T."/>
        </authorList>
    </citation>
    <scope>NUCLEOTIDE SEQUENCE [LARGE SCALE GENOMIC DNA]</scope>
    <source>
        <strain>K12 / W3110 / ATCC 27325 / DSM 5911</strain>
    </source>
</reference>
<reference key="4">
    <citation type="journal article" date="1997" name="Science">
        <title>The complete genome sequence of Escherichia coli K-12.</title>
        <authorList>
            <person name="Blattner F.R."/>
            <person name="Plunkett G. III"/>
            <person name="Bloch C.A."/>
            <person name="Perna N.T."/>
            <person name="Burland V."/>
            <person name="Riley M."/>
            <person name="Collado-Vides J."/>
            <person name="Glasner J.D."/>
            <person name="Rode C.K."/>
            <person name="Mayhew G.F."/>
            <person name="Gregor J."/>
            <person name="Davis N.W."/>
            <person name="Kirkpatrick H.A."/>
            <person name="Goeden M.A."/>
            <person name="Rose D.J."/>
            <person name="Mau B."/>
            <person name="Shao Y."/>
        </authorList>
    </citation>
    <scope>NUCLEOTIDE SEQUENCE [LARGE SCALE GENOMIC DNA]</scope>
    <source>
        <strain>K12 / MG1655 / ATCC 47076</strain>
    </source>
</reference>
<reference key="5">
    <citation type="journal article" date="2006" name="Mol. Syst. Biol.">
        <title>Highly accurate genome sequences of Escherichia coli K-12 strains MG1655 and W3110.</title>
        <authorList>
            <person name="Hayashi K."/>
            <person name="Morooka N."/>
            <person name="Yamamoto Y."/>
            <person name="Fujita K."/>
            <person name="Isono K."/>
            <person name="Choi S."/>
            <person name="Ohtsubo E."/>
            <person name="Baba T."/>
            <person name="Wanner B.L."/>
            <person name="Mori H."/>
            <person name="Horiuchi T."/>
        </authorList>
    </citation>
    <scope>NUCLEOTIDE SEQUENCE [LARGE SCALE GENOMIC DNA]</scope>
    <source>
        <strain>K12 / W3110 / ATCC 27325 / DSM 5911</strain>
    </source>
</reference>
<dbReference type="EMBL" id="L35031">
    <property type="status" value="NOT_ANNOTATED_CDS"/>
    <property type="molecule type" value="Genomic_DNA"/>
</dbReference>
<dbReference type="EMBL" id="AY725349">
    <property type="protein sequence ID" value="AAV92796.1"/>
    <property type="molecule type" value="Genomic_DNA"/>
</dbReference>
<dbReference type="EMBL" id="AY725350">
    <property type="protein sequence ID" value="AAV92797.1"/>
    <property type="molecule type" value="Genomic_DNA"/>
</dbReference>
<dbReference type="EMBL" id="AY725351">
    <property type="protein sequence ID" value="AAV92798.1"/>
    <property type="molecule type" value="Genomic_DNA"/>
</dbReference>
<dbReference type="EMBL" id="AY725352">
    <property type="protein sequence ID" value="AAV92799.1"/>
    <property type="molecule type" value="Genomic_DNA"/>
</dbReference>
<dbReference type="EMBL" id="AY725353">
    <property type="protein sequence ID" value="AAV92800.1"/>
    <property type="molecule type" value="Genomic_DNA"/>
</dbReference>
<dbReference type="EMBL" id="AY725354">
    <property type="protein sequence ID" value="AAV92801.1"/>
    <property type="molecule type" value="Genomic_DNA"/>
</dbReference>
<dbReference type="EMBL" id="AY725355">
    <property type="protein sequence ID" value="AAV92802.1"/>
    <property type="molecule type" value="Genomic_DNA"/>
</dbReference>
<dbReference type="EMBL" id="AY725356">
    <property type="protein sequence ID" value="AAV92803.1"/>
    <property type="molecule type" value="Genomic_DNA"/>
</dbReference>
<dbReference type="EMBL" id="AY725357">
    <property type="protein sequence ID" value="AAV92804.1"/>
    <property type="molecule type" value="Genomic_DNA"/>
</dbReference>
<dbReference type="EMBL" id="AY725358">
    <property type="protein sequence ID" value="AAV92805.1"/>
    <property type="molecule type" value="Genomic_DNA"/>
</dbReference>
<dbReference type="EMBL" id="AY725359">
    <property type="protein sequence ID" value="AAV92806.1"/>
    <property type="molecule type" value="Genomic_DNA"/>
</dbReference>
<dbReference type="EMBL" id="AY725360">
    <property type="protein sequence ID" value="AAV92807.1"/>
    <property type="molecule type" value="Genomic_DNA"/>
</dbReference>
<dbReference type="EMBL" id="AY725361">
    <property type="protein sequence ID" value="AAV92808.1"/>
    <property type="molecule type" value="Genomic_DNA"/>
</dbReference>
<dbReference type="EMBL" id="AY725362">
    <property type="protein sequence ID" value="AAV92809.1"/>
    <property type="molecule type" value="Genomic_DNA"/>
</dbReference>
<dbReference type="EMBL" id="AY725363">
    <property type="protein sequence ID" value="AAV92810.1"/>
    <property type="molecule type" value="Genomic_DNA"/>
</dbReference>
<dbReference type="EMBL" id="AY725364">
    <property type="protein sequence ID" value="AAV92811.1"/>
    <property type="molecule type" value="Genomic_DNA"/>
</dbReference>
<dbReference type="EMBL" id="AY725365">
    <property type="protein sequence ID" value="AAV92812.1"/>
    <property type="molecule type" value="Genomic_DNA"/>
</dbReference>
<dbReference type="EMBL" id="AY725366">
    <property type="protein sequence ID" value="AAV92813.1"/>
    <property type="molecule type" value="Genomic_DNA"/>
</dbReference>
<dbReference type="EMBL" id="AY725367">
    <property type="protein sequence ID" value="AAV92814.1"/>
    <property type="molecule type" value="Genomic_DNA"/>
</dbReference>
<dbReference type="EMBL" id="AY725368">
    <property type="protein sequence ID" value="AAV92815.1"/>
    <property type="molecule type" value="Genomic_DNA"/>
</dbReference>
<dbReference type="EMBL" id="AY725369">
    <property type="protein sequence ID" value="AAV92816.1"/>
    <property type="molecule type" value="Genomic_DNA"/>
</dbReference>
<dbReference type="EMBL" id="AY725370">
    <property type="protein sequence ID" value="AAV92817.1"/>
    <property type="molecule type" value="Genomic_DNA"/>
</dbReference>
<dbReference type="EMBL" id="AY725371">
    <property type="protein sequence ID" value="AAV92818.1"/>
    <property type="molecule type" value="Genomic_DNA"/>
</dbReference>
<dbReference type="EMBL" id="AY725372">
    <property type="protein sequence ID" value="AAV92819.1"/>
    <property type="molecule type" value="Genomic_DNA"/>
</dbReference>
<dbReference type="EMBL" id="AY725373">
    <property type="protein sequence ID" value="AAV92820.1"/>
    <property type="molecule type" value="Genomic_DNA"/>
</dbReference>
<dbReference type="EMBL" id="AY725374">
    <property type="protein sequence ID" value="AAV92821.1"/>
    <property type="molecule type" value="Genomic_DNA"/>
</dbReference>
<dbReference type="EMBL" id="AY725375">
    <property type="protein sequence ID" value="AAV92822.1"/>
    <property type="molecule type" value="Genomic_DNA"/>
</dbReference>
<dbReference type="EMBL" id="AY725376">
    <property type="protein sequence ID" value="AAV92823.1"/>
    <property type="molecule type" value="Genomic_DNA"/>
</dbReference>
<dbReference type="EMBL" id="AY725377">
    <property type="protein sequence ID" value="AAV92824.1"/>
    <property type="molecule type" value="Genomic_DNA"/>
</dbReference>
<dbReference type="EMBL" id="AY725378">
    <property type="protein sequence ID" value="AAV92825.1"/>
    <property type="molecule type" value="Genomic_DNA"/>
</dbReference>
<dbReference type="EMBL" id="AY725379">
    <property type="protein sequence ID" value="AAV92826.1"/>
    <property type="molecule type" value="Genomic_DNA"/>
</dbReference>
<dbReference type="EMBL" id="AY725380">
    <property type="protein sequence ID" value="AAV92827.1"/>
    <property type="molecule type" value="Genomic_DNA"/>
</dbReference>
<dbReference type="EMBL" id="AY725381">
    <property type="protein sequence ID" value="AAV92828.1"/>
    <property type="molecule type" value="Genomic_DNA"/>
</dbReference>
<dbReference type="EMBL" id="AY725382">
    <property type="protein sequence ID" value="AAV92829.1"/>
    <property type="molecule type" value="Genomic_DNA"/>
</dbReference>
<dbReference type="EMBL" id="AY725383">
    <property type="protein sequence ID" value="AAV92830.1"/>
    <property type="molecule type" value="Genomic_DNA"/>
</dbReference>
<dbReference type="EMBL" id="AY725384">
    <property type="protein sequence ID" value="AAV92831.1"/>
    <property type="molecule type" value="Genomic_DNA"/>
</dbReference>
<dbReference type="EMBL" id="AY725385">
    <property type="protein sequence ID" value="AAV92832.1"/>
    <property type="molecule type" value="Genomic_DNA"/>
</dbReference>
<dbReference type="EMBL" id="AY725386">
    <property type="protein sequence ID" value="AAV92833.1"/>
    <property type="molecule type" value="Genomic_DNA"/>
</dbReference>
<dbReference type="EMBL" id="AY725387">
    <property type="protein sequence ID" value="AAV92834.1"/>
    <property type="molecule type" value="Genomic_DNA"/>
</dbReference>
<dbReference type="EMBL" id="AY725388">
    <property type="protein sequence ID" value="AAV92835.1"/>
    <property type="molecule type" value="Genomic_DNA"/>
</dbReference>
<dbReference type="EMBL" id="AY725389">
    <property type="protein sequence ID" value="AAV92836.1"/>
    <property type="molecule type" value="Genomic_DNA"/>
</dbReference>
<dbReference type="EMBL" id="AY725390">
    <property type="protein sequence ID" value="AAV92837.1"/>
    <property type="molecule type" value="Genomic_DNA"/>
</dbReference>
<dbReference type="EMBL" id="AY725391">
    <property type="protein sequence ID" value="AAV92838.1"/>
    <property type="molecule type" value="Genomic_DNA"/>
</dbReference>
<dbReference type="EMBL" id="AY725392">
    <property type="protein sequence ID" value="AAV92839.1"/>
    <property type="molecule type" value="Genomic_DNA"/>
</dbReference>
<dbReference type="EMBL" id="AY725393">
    <property type="protein sequence ID" value="AAV92840.1"/>
    <property type="molecule type" value="Genomic_DNA"/>
</dbReference>
<dbReference type="EMBL" id="AY725394">
    <property type="protein sequence ID" value="AAV92841.1"/>
    <property type="molecule type" value="Genomic_DNA"/>
</dbReference>
<dbReference type="EMBL" id="AY725395">
    <property type="protein sequence ID" value="AAV92842.1"/>
    <property type="molecule type" value="Genomic_DNA"/>
</dbReference>
<dbReference type="EMBL" id="AY725396">
    <property type="protein sequence ID" value="AAV92843.1"/>
    <property type="molecule type" value="Genomic_DNA"/>
</dbReference>
<dbReference type="EMBL" id="AY725397">
    <property type="protein sequence ID" value="AAV92844.1"/>
    <property type="molecule type" value="Genomic_DNA"/>
</dbReference>
<dbReference type="EMBL" id="AY725398">
    <property type="protein sequence ID" value="AAV92845.1"/>
    <property type="molecule type" value="Genomic_DNA"/>
</dbReference>
<dbReference type="EMBL" id="AY725399">
    <property type="protein sequence ID" value="AAV92846.1"/>
    <property type="molecule type" value="Genomic_DNA"/>
</dbReference>
<dbReference type="EMBL" id="AY725400">
    <property type="protein sequence ID" value="AAV92847.1"/>
    <property type="molecule type" value="Genomic_DNA"/>
</dbReference>
<dbReference type="EMBL" id="AY725401">
    <property type="protein sequence ID" value="AAV92848.1"/>
    <property type="molecule type" value="Genomic_DNA"/>
</dbReference>
<dbReference type="EMBL" id="AY725402">
    <property type="protein sequence ID" value="AAV92849.1"/>
    <property type="molecule type" value="Genomic_DNA"/>
</dbReference>
<dbReference type="EMBL" id="AY725403">
    <property type="protein sequence ID" value="AAV92850.1"/>
    <property type="molecule type" value="Genomic_DNA"/>
</dbReference>
<dbReference type="EMBL" id="AY725404">
    <property type="protein sequence ID" value="AAV92851.1"/>
    <property type="molecule type" value="Genomic_DNA"/>
</dbReference>
<dbReference type="EMBL" id="AY725405">
    <property type="protein sequence ID" value="AAV92852.1"/>
    <property type="molecule type" value="Genomic_DNA"/>
</dbReference>
<dbReference type="EMBL" id="AY725406">
    <property type="protein sequence ID" value="AAV92853.1"/>
    <property type="molecule type" value="Genomic_DNA"/>
</dbReference>
<dbReference type="EMBL" id="AY725407">
    <property type="protein sequence ID" value="AAV92854.1"/>
    <property type="molecule type" value="Genomic_DNA"/>
</dbReference>
<dbReference type="EMBL" id="AY725408">
    <property type="protein sequence ID" value="AAV92855.1"/>
    <property type="molecule type" value="Genomic_DNA"/>
</dbReference>
<dbReference type="EMBL" id="AY725409">
    <property type="protein sequence ID" value="AAV92856.1"/>
    <property type="molecule type" value="Genomic_DNA"/>
</dbReference>
<dbReference type="EMBL" id="AY725410">
    <property type="protein sequence ID" value="AAV92857.1"/>
    <property type="molecule type" value="Genomic_DNA"/>
</dbReference>
<dbReference type="EMBL" id="AY725411">
    <property type="protein sequence ID" value="AAV92858.1"/>
    <property type="molecule type" value="Genomic_DNA"/>
</dbReference>
<dbReference type="EMBL" id="AY725412">
    <property type="protein sequence ID" value="AAV92859.1"/>
    <property type="molecule type" value="Genomic_DNA"/>
</dbReference>
<dbReference type="EMBL" id="AY725413">
    <property type="protein sequence ID" value="AAV92860.1"/>
    <property type="molecule type" value="Genomic_DNA"/>
</dbReference>
<dbReference type="EMBL" id="AY725414">
    <property type="protein sequence ID" value="AAV92861.1"/>
    <property type="molecule type" value="Genomic_DNA"/>
</dbReference>
<dbReference type="EMBL" id="AY725415">
    <property type="protein sequence ID" value="AAV92862.1"/>
    <property type="molecule type" value="Genomic_DNA"/>
</dbReference>
<dbReference type="EMBL" id="AY725416">
    <property type="protein sequence ID" value="AAV92863.1"/>
    <property type="molecule type" value="Genomic_DNA"/>
</dbReference>
<dbReference type="EMBL" id="AY725417">
    <property type="protein sequence ID" value="AAV92864.1"/>
    <property type="molecule type" value="Genomic_DNA"/>
</dbReference>
<dbReference type="EMBL" id="AY725418">
    <property type="protein sequence ID" value="AAV92865.1"/>
    <property type="molecule type" value="Genomic_DNA"/>
</dbReference>
<dbReference type="EMBL" id="AY725419">
    <property type="protein sequence ID" value="AAV92866.1"/>
    <property type="molecule type" value="Genomic_DNA"/>
</dbReference>
<dbReference type="EMBL" id="U00096">
    <property type="protein sequence ID" value="AAC75319.2"/>
    <property type="molecule type" value="Genomic_DNA"/>
</dbReference>
<dbReference type="EMBL" id="AP009048">
    <property type="protein sequence ID" value="BAA16079.2"/>
    <property type="molecule type" value="Genomic_DNA"/>
</dbReference>
<dbReference type="PIR" id="A64997">
    <property type="entry name" value="A64997"/>
</dbReference>
<dbReference type="RefSeq" id="NP_416762.2">
    <property type="nucleotide sequence ID" value="NC_000913.3"/>
</dbReference>
<dbReference type="RefSeq" id="WP_001295285.1">
    <property type="nucleotide sequence ID" value="NZ_STEB01000008.1"/>
</dbReference>
<dbReference type="PDB" id="2JSO">
    <property type="method" value="NMR"/>
    <property type="chains" value="A=1-88"/>
</dbReference>
<dbReference type="PDB" id="4HN7">
    <property type="method" value="X-ray"/>
    <property type="resolution" value="2.35 A"/>
    <property type="chains" value="A=1-88"/>
</dbReference>
<dbReference type="PDBsum" id="2JSO"/>
<dbReference type="PDBsum" id="4HN7"/>
<dbReference type="BMRB" id="P37590"/>
<dbReference type="SMR" id="P37590"/>
<dbReference type="BioGRID" id="4260491">
    <property type="interactions" value="20"/>
</dbReference>
<dbReference type="BioGRID" id="849519">
    <property type="interactions" value="1"/>
</dbReference>
<dbReference type="FunCoup" id="P37590">
    <property type="interactions" value="7"/>
</dbReference>
<dbReference type="IntAct" id="P37590">
    <property type="interactions" value="8"/>
</dbReference>
<dbReference type="STRING" id="511145.b2259"/>
<dbReference type="jPOST" id="P37590"/>
<dbReference type="PaxDb" id="511145-b2259"/>
<dbReference type="EnsemblBacteria" id="AAC75319">
    <property type="protein sequence ID" value="AAC75319"/>
    <property type="gene ID" value="b2259"/>
</dbReference>
<dbReference type="GeneID" id="93774914"/>
<dbReference type="GeneID" id="945130"/>
<dbReference type="KEGG" id="ecj:JW2254"/>
<dbReference type="KEGG" id="eco:b2259"/>
<dbReference type="KEGG" id="ecoc:C3026_12620"/>
<dbReference type="PATRIC" id="fig|511145.12.peg.2352"/>
<dbReference type="EchoBASE" id="EB2537"/>
<dbReference type="eggNOG" id="ENOG50337I9">
    <property type="taxonomic scope" value="Bacteria"/>
</dbReference>
<dbReference type="HOGENOM" id="CLU_192298_0_0_6"/>
<dbReference type="InParanoid" id="P37590"/>
<dbReference type="OMA" id="WWVKKVR"/>
<dbReference type="OrthoDB" id="6627905at2"/>
<dbReference type="BioCyc" id="EcoCyc:G7172-MONOMER"/>
<dbReference type="EvolutionaryTrace" id="P37590"/>
<dbReference type="PRO" id="PR:P37590"/>
<dbReference type="Proteomes" id="UP000000625">
    <property type="component" value="Chromosome"/>
</dbReference>
<dbReference type="GO" id="GO:0046677">
    <property type="term" value="P:response to antibiotic"/>
    <property type="evidence" value="ECO:0007669"/>
    <property type="project" value="UniProtKB-KW"/>
</dbReference>
<dbReference type="Gene3D" id="2.40.50.650">
    <property type="match status" value="1"/>
</dbReference>
<dbReference type="InterPro" id="IPR044854">
    <property type="entry name" value="PmrD_dom"/>
</dbReference>
<dbReference type="InterPro" id="IPR038679">
    <property type="entry name" value="PmrD_sf"/>
</dbReference>
<dbReference type="NCBIfam" id="NF011994">
    <property type="entry name" value="PRK15450.1"/>
    <property type="match status" value="1"/>
</dbReference>
<dbReference type="Pfam" id="PF11183">
    <property type="entry name" value="PmrD"/>
    <property type="match status" value="1"/>
</dbReference>
<evidence type="ECO:0000269" key="1">
    <source>
    </source>
</evidence>
<evidence type="ECO:0000305" key="2"/>
<evidence type="ECO:0007829" key="3">
    <source>
        <dbReference type="PDB" id="4HN7"/>
    </source>
</evidence>
<organism>
    <name type="scientific">Escherichia coli (strain K12)</name>
    <dbReference type="NCBI Taxonomy" id="83333"/>
    <lineage>
        <taxon>Bacteria</taxon>
        <taxon>Pseudomonadati</taxon>
        <taxon>Pseudomonadota</taxon>
        <taxon>Gammaproteobacteria</taxon>
        <taxon>Enterobacterales</taxon>
        <taxon>Enterobacteriaceae</taxon>
        <taxon>Escherichia</taxon>
    </lineage>
</organism>
<accession>P37590</accession>
<accession>P76475</accession>
<accession>P77155</accession>
<accession>Q5MN33</accession>
<accession>Q5MN36</accession>
<accession>Q5MN40</accession>
<accession>Q5MN44</accession>
<accession>Q5MN45</accession>
<accession>Q5MN54</accession>
<accession>Q5MN59</accession>
<accession>Q5MN60</accession>
<accession>Q5MN62</accession>
<accession>Q5MN63</accession>
<accession>Q5MN64</accession>
<accession>Q5MN90</accession>
<accession>Q8KJP6</accession>
<protein>
    <recommendedName>
        <fullName>Signal transduction protein PmrD</fullName>
    </recommendedName>
    <alternativeName>
        <fullName>BasR post-transcriptional activator</fullName>
    </alternativeName>
    <alternativeName>
        <fullName>Polymyxin resistance protein PmrD</fullName>
    </alternativeName>
</protein>
<sequence>MEWLVKKSCCNKQDNRHVLMLCDAGGAIKMIAEVKSDFAVKVGDLLSPLQNALYCINREKLHTVKVLSASSYSPDEWERQCKVAGKTQ</sequence>